<feature type="chain" id="PRO_1000048710" description="Chromosomal replication initiator protein DnaA">
    <location>
        <begin position="1"/>
        <end position="463"/>
    </location>
</feature>
<feature type="region of interest" description="Domain I, interacts with DnaA modulators" evidence="1">
    <location>
        <begin position="1"/>
        <end position="84"/>
    </location>
</feature>
<feature type="region of interest" description="Domain II" evidence="1">
    <location>
        <begin position="84"/>
        <end position="124"/>
    </location>
</feature>
<feature type="region of interest" description="Domain III, AAA+ region" evidence="1">
    <location>
        <begin position="125"/>
        <end position="343"/>
    </location>
</feature>
<feature type="region of interest" description="Domain IV, binds dsDNA" evidence="1">
    <location>
        <begin position="344"/>
        <end position="463"/>
    </location>
</feature>
<feature type="binding site" evidence="1">
    <location>
        <position position="171"/>
    </location>
    <ligand>
        <name>ATP</name>
        <dbReference type="ChEBI" id="CHEBI:30616"/>
    </ligand>
</feature>
<feature type="binding site" evidence="1">
    <location>
        <position position="173"/>
    </location>
    <ligand>
        <name>ATP</name>
        <dbReference type="ChEBI" id="CHEBI:30616"/>
    </ligand>
</feature>
<feature type="binding site" evidence="1">
    <location>
        <position position="174"/>
    </location>
    <ligand>
        <name>ATP</name>
        <dbReference type="ChEBI" id="CHEBI:30616"/>
    </ligand>
</feature>
<feature type="binding site" evidence="1">
    <location>
        <position position="175"/>
    </location>
    <ligand>
        <name>ATP</name>
        <dbReference type="ChEBI" id="CHEBI:30616"/>
    </ligand>
</feature>
<name>DNAA_RICB8</name>
<gene>
    <name evidence="1" type="primary">dnaA</name>
    <name type="ordered locus">A1I_02685</name>
</gene>
<sequence length="463" mass="52994">MNTNQIILTNQNDNSVNVWSNVTQDLYNYYGEALYNSWFSKVNFIESSLNTVILCAPTNFIRDWIKSKYSVVILQLFQHYNNAIKTVEIITKELPASNQATLELPTKTFADIGSSELNSENIFSTFDIRFTFDNFVVGAPNELAYAAARAVAESSSAVSESNPLFLYGGVGLGKTHLMHAIGWYIKQNNPSRKVIYMSAEKFMYQFVKALRNKEVMSFKEKFRSVDVLMIDDIQFICGKDSTQEEFFHTFNTLIDNNRQMVISCDRSPSDLDDIEDRIKSRLGWGLVADVHSTTYELRLGILESKIEQMNVKVPKDAIDFLASKIVSNVRELEGALNKVIAHSNFTAKEITLENTQNILRDLLRSNERIITVEDIQKKVANRYNIKLSDMSSPRRMRTIARPRQIAMYLSKILTPKSLVDIGKKFGKKDHTTVMHAIKKVEELLESDLELREEINLMMKILQN</sequence>
<evidence type="ECO:0000255" key="1">
    <source>
        <dbReference type="HAMAP-Rule" id="MF_00377"/>
    </source>
</evidence>
<proteinExistence type="inferred from homology"/>
<organism>
    <name type="scientific">Rickettsia bellii (strain OSU 85-389)</name>
    <dbReference type="NCBI Taxonomy" id="391896"/>
    <lineage>
        <taxon>Bacteria</taxon>
        <taxon>Pseudomonadati</taxon>
        <taxon>Pseudomonadota</taxon>
        <taxon>Alphaproteobacteria</taxon>
        <taxon>Rickettsiales</taxon>
        <taxon>Rickettsiaceae</taxon>
        <taxon>Rickettsieae</taxon>
        <taxon>Rickettsia</taxon>
        <taxon>belli group</taxon>
    </lineage>
</organism>
<dbReference type="EMBL" id="CP000849">
    <property type="protein sequence ID" value="ABV78908.1"/>
    <property type="molecule type" value="Genomic_DNA"/>
</dbReference>
<dbReference type="RefSeq" id="WP_012151731.1">
    <property type="nucleotide sequence ID" value="NC_009883.1"/>
</dbReference>
<dbReference type="SMR" id="A8GVN1"/>
<dbReference type="KEGG" id="rbo:A1I_02685"/>
<dbReference type="HOGENOM" id="CLU_026910_3_0_5"/>
<dbReference type="GO" id="GO:0005737">
    <property type="term" value="C:cytoplasm"/>
    <property type="evidence" value="ECO:0007669"/>
    <property type="project" value="UniProtKB-SubCell"/>
</dbReference>
<dbReference type="GO" id="GO:0005886">
    <property type="term" value="C:plasma membrane"/>
    <property type="evidence" value="ECO:0007669"/>
    <property type="project" value="TreeGrafter"/>
</dbReference>
<dbReference type="GO" id="GO:0005524">
    <property type="term" value="F:ATP binding"/>
    <property type="evidence" value="ECO:0007669"/>
    <property type="project" value="UniProtKB-UniRule"/>
</dbReference>
<dbReference type="GO" id="GO:0016887">
    <property type="term" value="F:ATP hydrolysis activity"/>
    <property type="evidence" value="ECO:0007669"/>
    <property type="project" value="InterPro"/>
</dbReference>
<dbReference type="GO" id="GO:0003688">
    <property type="term" value="F:DNA replication origin binding"/>
    <property type="evidence" value="ECO:0007669"/>
    <property type="project" value="UniProtKB-UniRule"/>
</dbReference>
<dbReference type="GO" id="GO:0008289">
    <property type="term" value="F:lipid binding"/>
    <property type="evidence" value="ECO:0007669"/>
    <property type="project" value="UniProtKB-KW"/>
</dbReference>
<dbReference type="GO" id="GO:0006270">
    <property type="term" value="P:DNA replication initiation"/>
    <property type="evidence" value="ECO:0007669"/>
    <property type="project" value="UniProtKB-UniRule"/>
</dbReference>
<dbReference type="GO" id="GO:0006275">
    <property type="term" value="P:regulation of DNA replication"/>
    <property type="evidence" value="ECO:0007669"/>
    <property type="project" value="UniProtKB-UniRule"/>
</dbReference>
<dbReference type="CDD" id="cd00009">
    <property type="entry name" value="AAA"/>
    <property type="match status" value="1"/>
</dbReference>
<dbReference type="CDD" id="cd06571">
    <property type="entry name" value="Bac_DnaA_C"/>
    <property type="match status" value="1"/>
</dbReference>
<dbReference type="FunFam" id="3.40.50.300:FF:000668">
    <property type="entry name" value="Chromosomal replication initiator protein DnaA"/>
    <property type="match status" value="1"/>
</dbReference>
<dbReference type="Gene3D" id="1.10.1750.10">
    <property type="match status" value="1"/>
</dbReference>
<dbReference type="Gene3D" id="1.10.8.60">
    <property type="match status" value="1"/>
</dbReference>
<dbReference type="Gene3D" id="3.30.300.180">
    <property type="match status" value="1"/>
</dbReference>
<dbReference type="Gene3D" id="3.40.50.300">
    <property type="entry name" value="P-loop containing nucleotide triphosphate hydrolases"/>
    <property type="match status" value="1"/>
</dbReference>
<dbReference type="HAMAP" id="MF_00377">
    <property type="entry name" value="DnaA_bact"/>
    <property type="match status" value="1"/>
</dbReference>
<dbReference type="InterPro" id="IPR003593">
    <property type="entry name" value="AAA+_ATPase"/>
</dbReference>
<dbReference type="InterPro" id="IPR001957">
    <property type="entry name" value="Chromosome_initiator_DnaA"/>
</dbReference>
<dbReference type="InterPro" id="IPR020591">
    <property type="entry name" value="Chromosome_initiator_DnaA-like"/>
</dbReference>
<dbReference type="InterPro" id="IPR018312">
    <property type="entry name" value="Chromosome_initiator_DnaA_CS"/>
</dbReference>
<dbReference type="InterPro" id="IPR013159">
    <property type="entry name" value="DnaA_C"/>
</dbReference>
<dbReference type="InterPro" id="IPR013317">
    <property type="entry name" value="DnaA_dom"/>
</dbReference>
<dbReference type="InterPro" id="IPR024633">
    <property type="entry name" value="DnaA_N_dom"/>
</dbReference>
<dbReference type="InterPro" id="IPR038454">
    <property type="entry name" value="DnaA_N_sf"/>
</dbReference>
<dbReference type="InterPro" id="IPR027417">
    <property type="entry name" value="P-loop_NTPase"/>
</dbReference>
<dbReference type="InterPro" id="IPR010921">
    <property type="entry name" value="Trp_repressor/repl_initiator"/>
</dbReference>
<dbReference type="NCBIfam" id="TIGR00362">
    <property type="entry name" value="DnaA"/>
    <property type="match status" value="1"/>
</dbReference>
<dbReference type="PANTHER" id="PTHR30050">
    <property type="entry name" value="CHROMOSOMAL REPLICATION INITIATOR PROTEIN DNAA"/>
    <property type="match status" value="1"/>
</dbReference>
<dbReference type="PANTHER" id="PTHR30050:SF2">
    <property type="entry name" value="CHROMOSOMAL REPLICATION INITIATOR PROTEIN DNAA"/>
    <property type="match status" value="1"/>
</dbReference>
<dbReference type="Pfam" id="PF00308">
    <property type="entry name" value="Bac_DnaA"/>
    <property type="match status" value="1"/>
</dbReference>
<dbReference type="Pfam" id="PF08299">
    <property type="entry name" value="Bac_DnaA_C"/>
    <property type="match status" value="1"/>
</dbReference>
<dbReference type="Pfam" id="PF11638">
    <property type="entry name" value="DnaA_N"/>
    <property type="match status" value="1"/>
</dbReference>
<dbReference type="PRINTS" id="PR00051">
    <property type="entry name" value="DNAA"/>
</dbReference>
<dbReference type="SMART" id="SM00382">
    <property type="entry name" value="AAA"/>
    <property type="match status" value="1"/>
</dbReference>
<dbReference type="SMART" id="SM00760">
    <property type="entry name" value="Bac_DnaA_C"/>
    <property type="match status" value="1"/>
</dbReference>
<dbReference type="SUPFAM" id="SSF52540">
    <property type="entry name" value="P-loop containing nucleoside triphosphate hydrolases"/>
    <property type="match status" value="1"/>
</dbReference>
<dbReference type="SUPFAM" id="SSF48295">
    <property type="entry name" value="TrpR-like"/>
    <property type="match status" value="1"/>
</dbReference>
<dbReference type="PROSITE" id="PS01008">
    <property type="entry name" value="DNAA"/>
    <property type="match status" value="1"/>
</dbReference>
<comment type="function">
    <text evidence="1">Plays an essential role in the initiation and regulation of chromosomal replication. ATP-DnaA binds to the origin of replication (oriC) to initiate formation of the DNA replication initiation complex once per cell cycle. Binds the DnaA box (a 9 base pair repeat at the origin) and separates the double-stranded (ds)DNA. Forms a right-handed helical filament on oriC DNA; dsDNA binds to the exterior of the filament while single-stranded (ss)DNA is stabiized in the filament's interior. The ATP-DnaA-oriC complex binds and stabilizes one strand of the AT-rich DNA unwinding element (DUE), permitting loading of DNA polymerase. After initiation quickly degrades to an ADP-DnaA complex that is not apt for DNA replication. Binds acidic phospholipids.</text>
</comment>
<comment type="subunit">
    <text evidence="1">Oligomerizes as a right-handed, spiral filament on DNA at oriC.</text>
</comment>
<comment type="subcellular location">
    <subcellularLocation>
        <location evidence="1">Cytoplasm</location>
    </subcellularLocation>
</comment>
<comment type="domain">
    <text evidence="1">Domain I is involved in oligomerization and binding regulators, domain II is flexibile and of varying length in different bacteria, domain III forms the AAA+ region, while domain IV binds dsDNA.</text>
</comment>
<comment type="similarity">
    <text evidence="1">Belongs to the DnaA family.</text>
</comment>
<keyword id="KW-0067">ATP-binding</keyword>
<keyword id="KW-0963">Cytoplasm</keyword>
<keyword id="KW-0235">DNA replication</keyword>
<keyword id="KW-0238">DNA-binding</keyword>
<keyword id="KW-0446">Lipid-binding</keyword>
<keyword id="KW-0547">Nucleotide-binding</keyword>
<reference key="1">
    <citation type="submission" date="2007-09" db="EMBL/GenBank/DDBJ databases">
        <title>Complete genome sequencing of Rickettsia bellii.</title>
        <authorList>
            <person name="Madan A."/>
            <person name="Lee H."/>
            <person name="Madan A."/>
            <person name="Yoon J.-G."/>
            <person name="Ryu G.-Y."/>
            <person name="Dasch G."/>
            <person name="Ereemeva M."/>
        </authorList>
    </citation>
    <scope>NUCLEOTIDE SEQUENCE [LARGE SCALE GENOMIC DNA]</scope>
    <source>
        <strain>OSU 85-389</strain>
    </source>
</reference>
<protein>
    <recommendedName>
        <fullName evidence="1">Chromosomal replication initiator protein DnaA</fullName>
    </recommendedName>
</protein>
<accession>A8GVN1</accession>